<protein>
    <recommendedName>
        <fullName>Beta-lactamase-like protein 4</fullName>
    </recommendedName>
</protein>
<gene>
    <name type="ORF">DDB_G0282557</name>
</gene>
<accession>Q54SB5</accession>
<evidence type="ECO:0000255" key="1"/>
<evidence type="ECO:0000305" key="2"/>
<comment type="subcellular location">
    <subcellularLocation>
        <location evidence="2">Secreted</location>
    </subcellularLocation>
</comment>
<comment type="similarity">
    <text evidence="2">Belongs to the beta-lactamase family.</text>
</comment>
<comment type="sequence caution" evidence="2">
    <conflict type="erroneous gene model prediction">
        <sequence resource="EMBL-CDS" id="EAL66138"/>
    </conflict>
</comment>
<organism>
    <name type="scientific">Dictyostelium discoideum</name>
    <name type="common">Social amoeba</name>
    <dbReference type="NCBI Taxonomy" id="44689"/>
    <lineage>
        <taxon>Eukaryota</taxon>
        <taxon>Amoebozoa</taxon>
        <taxon>Evosea</taxon>
        <taxon>Eumycetozoa</taxon>
        <taxon>Dictyostelia</taxon>
        <taxon>Dictyosteliales</taxon>
        <taxon>Dictyosteliaceae</taxon>
        <taxon>Dictyostelium</taxon>
    </lineage>
</organism>
<proteinExistence type="inferred from homology"/>
<feature type="signal peptide" evidence="1">
    <location>
        <begin position="1"/>
        <end position="19"/>
    </location>
</feature>
<feature type="chain" id="PRO_0000343692" description="Beta-lactamase-like protein 4">
    <location>
        <begin position="20"/>
        <end position="569"/>
    </location>
</feature>
<feature type="glycosylation site" description="N-linked (GlcNAc...) asparagine" evidence="1">
    <location>
        <position position="87"/>
    </location>
</feature>
<feature type="glycosylation site" description="N-linked (GlcNAc...) asparagine" evidence="1">
    <location>
        <position position="172"/>
    </location>
</feature>
<feature type="glycosylation site" description="N-linked (GlcNAc...) asparagine" evidence="1">
    <location>
        <position position="239"/>
    </location>
</feature>
<feature type="glycosylation site" description="N-linked (GlcNAc...) asparagine" evidence="1">
    <location>
        <position position="240"/>
    </location>
</feature>
<feature type="glycosylation site" description="N-linked (GlcNAc...) asparagine" evidence="1">
    <location>
        <position position="250"/>
    </location>
</feature>
<feature type="glycosylation site" description="N-linked (GlcNAc...) asparagine" evidence="1">
    <location>
        <position position="299"/>
    </location>
</feature>
<feature type="glycosylation site" description="N-linked (GlcNAc...) asparagine" evidence="1">
    <location>
        <position position="343"/>
    </location>
</feature>
<feature type="glycosylation site" description="N-linked (GlcNAc...) asparagine" evidence="1">
    <location>
        <position position="412"/>
    </location>
</feature>
<feature type="glycosylation site" description="N-linked (GlcNAc...) asparagine" evidence="1">
    <location>
        <position position="419"/>
    </location>
</feature>
<feature type="glycosylation site" description="N-linked (GlcNAc...) asparagine" evidence="1">
    <location>
        <position position="436"/>
    </location>
</feature>
<feature type="glycosylation site" description="N-linked (GlcNAc...) asparagine" evidence="1">
    <location>
        <position position="468"/>
    </location>
</feature>
<feature type="glycosylation site" description="N-linked (GlcNAc...) asparagine" evidence="1">
    <location>
        <position position="509"/>
    </location>
</feature>
<feature type="glycosylation site" description="N-linked (GlcNAc...) asparagine" evidence="1">
    <location>
        <position position="535"/>
    </location>
</feature>
<sequence length="569" mass="64406">MKYYLYLFLLFTFANLLYSCPTYPLPIKIDQNDPLLLKAYNDIDLLIQSKMKADGVKSFVATIVYMDKVVFSKAYGKLNYLDINSPNLTLDHNFRISSVTKVFTSLMMFKLRDQGIINSLDDDIRDYFPKFKIKSIFKKKEEKFITFRQLASHQSGLSRETPCHRNEFGTSNCTEKIILAKLSKQFLISKPTTLSHYSNLGYSLLGRTLGESLRMKRMKEQEPYEYWVTNNIFKPLGMNNTTFNYEDIINNTAPGLVNNNGKYSIPSMTKSGWNSPGGGVFSTARDMGKLLIHLLGMNNNSLDIRSPSYLKESTLNELFSPSNLLNDGSASYGMPFLHSYSTNNSLWILSKNGDLQGYVSNIAFVKPYKLGLFFSSLTSVSSSDVYTNAAIDILIPVYKKLLEQAAIDSVINSTTTSSNSTTTTTTTTTTTTTTTNNTMESIFISKIPHSLLIGIYTNDYGNKFLILNQTTYGDYLNRLLVSYNGASLVLNKFELDNEYPYIKRISFYNESIPTCRTIASGSNDELIYFTFKDINGTIIDFNNNNNNQNIDINNLFVYSVQIMGSLLFK</sequence>
<reference key="1">
    <citation type="journal article" date="2005" name="Nature">
        <title>The genome of the social amoeba Dictyostelium discoideum.</title>
        <authorList>
            <person name="Eichinger L."/>
            <person name="Pachebat J.A."/>
            <person name="Gloeckner G."/>
            <person name="Rajandream M.A."/>
            <person name="Sucgang R."/>
            <person name="Berriman M."/>
            <person name="Song J."/>
            <person name="Olsen R."/>
            <person name="Szafranski K."/>
            <person name="Xu Q."/>
            <person name="Tunggal B."/>
            <person name="Kummerfeld S."/>
            <person name="Madera M."/>
            <person name="Konfortov B.A."/>
            <person name="Rivero F."/>
            <person name="Bankier A.T."/>
            <person name="Lehmann R."/>
            <person name="Hamlin N."/>
            <person name="Davies R."/>
            <person name="Gaudet P."/>
            <person name="Fey P."/>
            <person name="Pilcher K."/>
            <person name="Chen G."/>
            <person name="Saunders D."/>
            <person name="Sodergren E.J."/>
            <person name="Davis P."/>
            <person name="Kerhornou A."/>
            <person name="Nie X."/>
            <person name="Hall N."/>
            <person name="Anjard C."/>
            <person name="Hemphill L."/>
            <person name="Bason N."/>
            <person name="Farbrother P."/>
            <person name="Desany B."/>
            <person name="Just E."/>
            <person name="Morio T."/>
            <person name="Rost R."/>
            <person name="Churcher C.M."/>
            <person name="Cooper J."/>
            <person name="Haydock S."/>
            <person name="van Driessche N."/>
            <person name="Cronin A."/>
            <person name="Goodhead I."/>
            <person name="Muzny D.M."/>
            <person name="Mourier T."/>
            <person name="Pain A."/>
            <person name="Lu M."/>
            <person name="Harper D."/>
            <person name="Lindsay R."/>
            <person name="Hauser H."/>
            <person name="James K.D."/>
            <person name="Quiles M."/>
            <person name="Madan Babu M."/>
            <person name="Saito T."/>
            <person name="Buchrieser C."/>
            <person name="Wardroper A."/>
            <person name="Felder M."/>
            <person name="Thangavelu M."/>
            <person name="Johnson D."/>
            <person name="Knights A."/>
            <person name="Loulseged H."/>
            <person name="Mungall K.L."/>
            <person name="Oliver K."/>
            <person name="Price C."/>
            <person name="Quail M.A."/>
            <person name="Urushihara H."/>
            <person name="Hernandez J."/>
            <person name="Rabbinowitsch E."/>
            <person name="Steffen D."/>
            <person name="Sanders M."/>
            <person name="Ma J."/>
            <person name="Kohara Y."/>
            <person name="Sharp S."/>
            <person name="Simmonds M.N."/>
            <person name="Spiegler S."/>
            <person name="Tivey A."/>
            <person name="Sugano S."/>
            <person name="White B."/>
            <person name="Walker D."/>
            <person name="Woodward J.R."/>
            <person name="Winckler T."/>
            <person name="Tanaka Y."/>
            <person name="Shaulsky G."/>
            <person name="Schleicher M."/>
            <person name="Weinstock G.M."/>
            <person name="Rosenthal A."/>
            <person name="Cox E.C."/>
            <person name="Chisholm R.L."/>
            <person name="Gibbs R.A."/>
            <person name="Loomis W.F."/>
            <person name="Platzer M."/>
            <person name="Kay R.R."/>
            <person name="Williams J.G."/>
            <person name="Dear P.H."/>
            <person name="Noegel A.A."/>
            <person name="Barrell B.G."/>
            <person name="Kuspa A."/>
        </authorList>
    </citation>
    <scope>NUCLEOTIDE SEQUENCE [LARGE SCALE GENOMIC DNA]</scope>
    <source>
        <strain>AX4</strain>
    </source>
</reference>
<name>BLML4_DICDI</name>
<dbReference type="EMBL" id="AAFI02000047">
    <property type="protein sequence ID" value="EAL66138.1"/>
    <property type="status" value="ALT_SEQ"/>
    <property type="molecule type" value="Genomic_DNA"/>
</dbReference>
<dbReference type="RefSeq" id="XP_640124.1">
    <property type="nucleotide sequence ID" value="XM_635032.1"/>
</dbReference>
<dbReference type="SMR" id="Q54SB5"/>
<dbReference type="FunCoup" id="Q54SB5">
    <property type="interactions" value="3"/>
</dbReference>
<dbReference type="MEROPS" id="S12.A24"/>
<dbReference type="GlyGen" id="Q54SB5">
    <property type="glycosylation" value="13 sites"/>
</dbReference>
<dbReference type="PaxDb" id="44689-DDB0204836"/>
<dbReference type="EnsemblProtists" id="EAL66138">
    <property type="protein sequence ID" value="EAL66138"/>
    <property type="gene ID" value="DDB_G0282557"/>
</dbReference>
<dbReference type="GeneID" id="8623659"/>
<dbReference type="KEGG" id="ddi:DDB_G0282557"/>
<dbReference type="dictyBase" id="DDB_G0282557"/>
<dbReference type="VEuPathDB" id="AmoebaDB:DDB_G0282557"/>
<dbReference type="InParanoid" id="Q54SB5"/>
<dbReference type="PhylomeDB" id="Q54SB5"/>
<dbReference type="PRO" id="PR:Q54SB5"/>
<dbReference type="Proteomes" id="UP000002195">
    <property type="component" value="Chromosome 3"/>
</dbReference>
<dbReference type="GO" id="GO:0005576">
    <property type="term" value="C:extracellular region"/>
    <property type="evidence" value="ECO:0007669"/>
    <property type="project" value="UniProtKB-SubCell"/>
</dbReference>
<dbReference type="Gene3D" id="3.40.710.10">
    <property type="entry name" value="DD-peptidase/beta-lactamase superfamily"/>
    <property type="match status" value="1"/>
</dbReference>
<dbReference type="InterPro" id="IPR001466">
    <property type="entry name" value="Beta-lactam-related"/>
</dbReference>
<dbReference type="InterPro" id="IPR012338">
    <property type="entry name" value="Beta-lactam/transpept-like"/>
</dbReference>
<dbReference type="InterPro" id="IPR051478">
    <property type="entry name" value="Beta-lactamase-like_AB/R"/>
</dbReference>
<dbReference type="PANTHER" id="PTHR22935:SF95">
    <property type="entry name" value="BETA-LACTAMASE-LIKE 1-RELATED"/>
    <property type="match status" value="1"/>
</dbReference>
<dbReference type="PANTHER" id="PTHR22935">
    <property type="entry name" value="PENICILLIN-BINDING PROTEIN"/>
    <property type="match status" value="1"/>
</dbReference>
<dbReference type="Pfam" id="PF00144">
    <property type="entry name" value="Beta-lactamase"/>
    <property type="match status" value="1"/>
</dbReference>
<dbReference type="SUPFAM" id="SSF56601">
    <property type="entry name" value="beta-lactamase/transpeptidase-like"/>
    <property type="match status" value="1"/>
</dbReference>
<keyword id="KW-0325">Glycoprotein</keyword>
<keyword id="KW-1185">Reference proteome</keyword>
<keyword id="KW-0964">Secreted</keyword>
<keyword id="KW-0732">Signal</keyword>